<name>RL7_VIBPA</name>
<comment type="function">
    <text evidence="1">Forms part of the ribosomal stalk which helps the ribosome interact with GTP-bound translation factors. Is thus essential for accurate translation.</text>
</comment>
<comment type="subunit">
    <text evidence="1">Homodimer. Part of the ribosomal stalk of the 50S ribosomal subunit. Forms a multimeric L10(L12)X complex, where L10 forms an elongated spine to which 2 to 4 L12 dimers bind in a sequential fashion. Binds GTP-bound translation factors.</text>
</comment>
<comment type="similarity">
    <text evidence="1">Belongs to the bacterial ribosomal protein bL12 family.</text>
</comment>
<proteinExistence type="inferred from homology"/>
<feature type="chain" id="PRO_0000157603" description="Large ribosomal subunit protein bL12">
    <location>
        <begin position="1"/>
        <end position="122"/>
    </location>
</feature>
<organism>
    <name type="scientific">Vibrio parahaemolyticus serotype O3:K6 (strain RIMD 2210633)</name>
    <dbReference type="NCBI Taxonomy" id="223926"/>
    <lineage>
        <taxon>Bacteria</taxon>
        <taxon>Pseudomonadati</taxon>
        <taxon>Pseudomonadota</taxon>
        <taxon>Gammaproteobacteria</taxon>
        <taxon>Vibrionales</taxon>
        <taxon>Vibrionaceae</taxon>
        <taxon>Vibrio</taxon>
    </lineage>
</organism>
<evidence type="ECO:0000255" key="1">
    <source>
        <dbReference type="HAMAP-Rule" id="MF_00368"/>
    </source>
</evidence>
<evidence type="ECO:0000305" key="2"/>
<dbReference type="EMBL" id="BA000031">
    <property type="protein sequence ID" value="BAC61186.1"/>
    <property type="molecule type" value="Genomic_DNA"/>
</dbReference>
<dbReference type="RefSeq" id="NP_799302.1">
    <property type="nucleotide sequence ID" value="NC_004603.1"/>
</dbReference>
<dbReference type="RefSeq" id="WP_005466152.1">
    <property type="nucleotide sequence ID" value="NC_004603.1"/>
</dbReference>
<dbReference type="SMR" id="Q87KQ3"/>
<dbReference type="GeneID" id="1190498"/>
<dbReference type="KEGG" id="vpa:VP2923"/>
<dbReference type="PATRIC" id="fig|223926.6.peg.2811"/>
<dbReference type="eggNOG" id="COG0222">
    <property type="taxonomic scope" value="Bacteria"/>
</dbReference>
<dbReference type="HOGENOM" id="CLU_086499_3_2_6"/>
<dbReference type="Proteomes" id="UP000002493">
    <property type="component" value="Chromosome 1"/>
</dbReference>
<dbReference type="GO" id="GO:0022625">
    <property type="term" value="C:cytosolic large ribosomal subunit"/>
    <property type="evidence" value="ECO:0007669"/>
    <property type="project" value="TreeGrafter"/>
</dbReference>
<dbReference type="GO" id="GO:0003729">
    <property type="term" value="F:mRNA binding"/>
    <property type="evidence" value="ECO:0007669"/>
    <property type="project" value="TreeGrafter"/>
</dbReference>
<dbReference type="GO" id="GO:0003735">
    <property type="term" value="F:structural constituent of ribosome"/>
    <property type="evidence" value="ECO:0007669"/>
    <property type="project" value="InterPro"/>
</dbReference>
<dbReference type="GO" id="GO:0006412">
    <property type="term" value="P:translation"/>
    <property type="evidence" value="ECO:0007669"/>
    <property type="project" value="UniProtKB-UniRule"/>
</dbReference>
<dbReference type="CDD" id="cd00387">
    <property type="entry name" value="Ribosomal_L7_L12"/>
    <property type="match status" value="1"/>
</dbReference>
<dbReference type="FunFam" id="1.20.5.710:FF:000001">
    <property type="entry name" value="50S ribosomal protein L7/L12"/>
    <property type="match status" value="1"/>
</dbReference>
<dbReference type="FunFam" id="3.30.1390.10:FF:000001">
    <property type="entry name" value="50S ribosomal protein L7/L12"/>
    <property type="match status" value="1"/>
</dbReference>
<dbReference type="Gene3D" id="3.30.1390.10">
    <property type="match status" value="1"/>
</dbReference>
<dbReference type="Gene3D" id="1.20.5.710">
    <property type="entry name" value="Single helix bin"/>
    <property type="match status" value="1"/>
</dbReference>
<dbReference type="HAMAP" id="MF_00368">
    <property type="entry name" value="Ribosomal_bL12"/>
    <property type="match status" value="1"/>
</dbReference>
<dbReference type="InterPro" id="IPR000206">
    <property type="entry name" value="Ribosomal_bL12"/>
</dbReference>
<dbReference type="InterPro" id="IPR013823">
    <property type="entry name" value="Ribosomal_bL12_C"/>
</dbReference>
<dbReference type="InterPro" id="IPR014719">
    <property type="entry name" value="Ribosomal_bL12_C/ClpS-like"/>
</dbReference>
<dbReference type="InterPro" id="IPR008932">
    <property type="entry name" value="Ribosomal_bL12_oligo"/>
</dbReference>
<dbReference type="InterPro" id="IPR036235">
    <property type="entry name" value="Ribosomal_bL12_oligo_N_sf"/>
</dbReference>
<dbReference type="NCBIfam" id="TIGR00855">
    <property type="entry name" value="L12"/>
    <property type="match status" value="1"/>
</dbReference>
<dbReference type="PANTHER" id="PTHR45987">
    <property type="entry name" value="39S RIBOSOMAL PROTEIN L12"/>
    <property type="match status" value="1"/>
</dbReference>
<dbReference type="PANTHER" id="PTHR45987:SF4">
    <property type="entry name" value="LARGE RIBOSOMAL SUBUNIT PROTEIN BL12M"/>
    <property type="match status" value="1"/>
</dbReference>
<dbReference type="Pfam" id="PF00542">
    <property type="entry name" value="Ribosomal_L12"/>
    <property type="match status" value="1"/>
</dbReference>
<dbReference type="Pfam" id="PF16320">
    <property type="entry name" value="Ribosomal_L12_N"/>
    <property type="match status" value="1"/>
</dbReference>
<dbReference type="SUPFAM" id="SSF54736">
    <property type="entry name" value="ClpS-like"/>
    <property type="match status" value="1"/>
</dbReference>
<dbReference type="SUPFAM" id="SSF48300">
    <property type="entry name" value="Ribosomal protein L7/12, oligomerisation (N-terminal) domain"/>
    <property type="match status" value="1"/>
</dbReference>
<protein>
    <recommendedName>
        <fullName evidence="1">Large ribosomal subunit protein bL12</fullName>
    </recommendedName>
    <alternativeName>
        <fullName evidence="2">50S ribosomal protein L7/L12</fullName>
    </alternativeName>
</protein>
<accession>Q87KQ3</accession>
<sequence length="122" mass="12192">MSITNEQILDAVAEMSVMQVVELIEAMEEKFGVSAAAAVVAGGAAAGAAVEEQTEFDVILESAGGNKVAVIKAVRGATGLGLKEAKALVDGAPAPLKEGVDKAEADALKAQLEEAGATVAVK</sequence>
<reference key="1">
    <citation type="journal article" date="2003" name="Lancet">
        <title>Genome sequence of Vibrio parahaemolyticus: a pathogenic mechanism distinct from that of V. cholerae.</title>
        <authorList>
            <person name="Makino K."/>
            <person name="Oshima K."/>
            <person name="Kurokawa K."/>
            <person name="Yokoyama K."/>
            <person name="Uda T."/>
            <person name="Tagomori K."/>
            <person name="Iijima Y."/>
            <person name="Najima M."/>
            <person name="Nakano M."/>
            <person name="Yamashita A."/>
            <person name="Kubota Y."/>
            <person name="Kimura S."/>
            <person name="Yasunaga T."/>
            <person name="Honda T."/>
            <person name="Shinagawa H."/>
            <person name="Hattori M."/>
            <person name="Iida T."/>
        </authorList>
    </citation>
    <scope>NUCLEOTIDE SEQUENCE [LARGE SCALE GENOMIC DNA]</scope>
    <source>
        <strain>RIMD 2210633</strain>
    </source>
</reference>
<keyword id="KW-0687">Ribonucleoprotein</keyword>
<keyword id="KW-0689">Ribosomal protein</keyword>
<gene>
    <name evidence="1" type="primary">rplL</name>
    <name type="ordered locus">VP2923</name>
</gene>